<evidence type="ECO:0000250" key="1"/>
<evidence type="ECO:0000255" key="2">
    <source>
        <dbReference type="HAMAP-Rule" id="MF_00223"/>
    </source>
</evidence>
<keyword id="KW-0342">GTP-binding</keyword>
<keyword id="KW-0378">Hydrolase</keyword>
<keyword id="KW-0479">Metal-binding</keyword>
<keyword id="KW-0547">Nucleotide-binding</keyword>
<keyword id="KW-0554">One-carbon metabolism</keyword>
<keyword id="KW-1185">Reference proteome</keyword>
<keyword id="KW-0862">Zinc</keyword>
<proteinExistence type="inferred from homology"/>
<dbReference type="EC" id="3.5.4.16" evidence="2"/>
<dbReference type="EMBL" id="AE010300">
    <property type="protein sequence ID" value="AAN51453.1"/>
    <property type="molecule type" value="Genomic_DNA"/>
</dbReference>
<dbReference type="RefSeq" id="NP_714435.1">
    <property type="nucleotide sequence ID" value="NC_004342.2"/>
</dbReference>
<dbReference type="RefSeq" id="WP_000390685.1">
    <property type="nucleotide sequence ID" value="NC_004342.2"/>
</dbReference>
<dbReference type="SMR" id="Q8EYG1"/>
<dbReference type="FunCoup" id="Q8EYG1">
    <property type="interactions" value="394"/>
</dbReference>
<dbReference type="STRING" id="189518.LA_4255"/>
<dbReference type="PaxDb" id="189518-LA_4255"/>
<dbReference type="EnsemblBacteria" id="AAN51453">
    <property type="protein sequence ID" value="AAN51453"/>
    <property type="gene ID" value="LA_4255"/>
</dbReference>
<dbReference type="GeneID" id="61143269"/>
<dbReference type="KEGG" id="lil:LA_4255"/>
<dbReference type="PATRIC" id="fig|189518.3.peg.4227"/>
<dbReference type="HOGENOM" id="CLU_049768_3_1_12"/>
<dbReference type="InParanoid" id="Q8EYG1"/>
<dbReference type="OrthoDB" id="9801207at2"/>
<dbReference type="UniPathway" id="UPA00848">
    <property type="reaction ID" value="UER00151"/>
</dbReference>
<dbReference type="Proteomes" id="UP000001408">
    <property type="component" value="Chromosome I"/>
</dbReference>
<dbReference type="GO" id="GO:0005737">
    <property type="term" value="C:cytoplasm"/>
    <property type="evidence" value="ECO:0000318"/>
    <property type="project" value="GO_Central"/>
</dbReference>
<dbReference type="GO" id="GO:0005525">
    <property type="term" value="F:GTP binding"/>
    <property type="evidence" value="ECO:0000318"/>
    <property type="project" value="GO_Central"/>
</dbReference>
<dbReference type="GO" id="GO:0003934">
    <property type="term" value="F:GTP cyclohydrolase I activity"/>
    <property type="evidence" value="ECO:0000318"/>
    <property type="project" value="GO_Central"/>
</dbReference>
<dbReference type="GO" id="GO:0008270">
    <property type="term" value="F:zinc ion binding"/>
    <property type="evidence" value="ECO:0000318"/>
    <property type="project" value="GO_Central"/>
</dbReference>
<dbReference type="GO" id="GO:0006730">
    <property type="term" value="P:one-carbon metabolic process"/>
    <property type="evidence" value="ECO:0007669"/>
    <property type="project" value="UniProtKB-UniRule"/>
</dbReference>
<dbReference type="GO" id="GO:0006729">
    <property type="term" value="P:tetrahydrobiopterin biosynthetic process"/>
    <property type="evidence" value="ECO:0000318"/>
    <property type="project" value="GO_Central"/>
</dbReference>
<dbReference type="GO" id="GO:0046654">
    <property type="term" value="P:tetrahydrofolate biosynthetic process"/>
    <property type="evidence" value="ECO:0007669"/>
    <property type="project" value="UniProtKB-UniRule"/>
</dbReference>
<dbReference type="FunFam" id="1.10.286.10:FF:000005">
    <property type="entry name" value="GTP cyclohydrolase 1"/>
    <property type="match status" value="1"/>
</dbReference>
<dbReference type="FunFam" id="3.30.1130.10:FF:000001">
    <property type="entry name" value="GTP cyclohydrolase 1"/>
    <property type="match status" value="1"/>
</dbReference>
<dbReference type="Gene3D" id="1.10.286.10">
    <property type="match status" value="1"/>
</dbReference>
<dbReference type="Gene3D" id="3.30.1130.10">
    <property type="match status" value="1"/>
</dbReference>
<dbReference type="HAMAP" id="MF_00223">
    <property type="entry name" value="FolE"/>
    <property type="match status" value="1"/>
</dbReference>
<dbReference type="InterPro" id="IPR043133">
    <property type="entry name" value="GTP-CH-I_C/QueF"/>
</dbReference>
<dbReference type="InterPro" id="IPR043134">
    <property type="entry name" value="GTP-CH-I_N"/>
</dbReference>
<dbReference type="InterPro" id="IPR001474">
    <property type="entry name" value="GTP_CycHdrlase_I"/>
</dbReference>
<dbReference type="InterPro" id="IPR018234">
    <property type="entry name" value="GTP_CycHdrlase_I_CS"/>
</dbReference>
<dbReference type="InterPro" id="IPR020602">
    <property type="entry name" value="GTP_CycHdrlase_I_dom"/>
</dbReference>
<dbReference type="NCBIfam" id="TIGR00063">
    <property type="entry name" value="folE"/>
    <property type="match status" value="1"/>
</dbReference>
<dbReference type="NCBIfam" id="NF006825">
    <property type="entry name" value="PRK09347.1-2"/>
    <property type="match status" value="1"/>
</dbReference>
<dbReference type="NCBIfam" id="NF006826">
    <property type="entry name" value="PRK09347.1-3"/>
    <property type="match status" value="1"/>
</dbReference>
<dbReference type="PANTHER" id="PTHR11109:SF7">
    <property type="entry name" value="GTP CYCLOHYDROLASE 1"/>
    <property type="match status" value="1"/>
</dbReference>
<dbReference type="PANTHER" id="PTHR11109">
    <property type="entry name" value="GTP CYCLOHYDROLASE I"/>
    <property type="match status" value="1"/>
</dbReference>
<dbReference type="Pfam" id="PF01227">
    <property type="entry name" value="GTP_cyclohydroI"/>
    <property type="match status" value="1"/>
</dbReference>
<dbReference type="SUPFAM" id="SSF55620">
    <property type="entry name" value="Tetrahydrobiopterin biosynthesis enzymes-like"/>
    <property type="match status" value="1"/>
</dbReference>
<dbReference type="PROSITE" id="PS00859">
    <property type="entry name" value="GTP_CYCLOHYDROL_1_1"/>
    <property type="match status" value="1"/>
</dbReference>
<dbReference type="PROSITE" id="PS00860">
    <property type="entry name" value="GTP_CYCLOHYDROL_1_2"/>
    <property type="match status" value="1"/>
</dbReference>
<name>GCH1_LEPIN</name>
<comment type="catalytic activity">
    <reaction evidence="2">
        <text>GTP + H2O = 7,8-dihydroneopterin 3'-triphosphate + formate + H(+)</text>
        <dbReference type="Rhea" id="RHEA:17473"/>
        <dbReference type="ChEBI" id="CHEBI:15377"/>
        <dbReference type="ChEBI" id="CHEBI:15378"/>
        <dbReference type="ChEBI" id="CHEBI:15740"/>
        <dbReference type="ChEBI" id="CHEBI:37565"/>
        <dbReference type="ChEBI" id="CHEBI:58462"/>
        <dbReference type="EC" id="3.5.4.16"/>
    </reaction>
</comment>
<comment type="pathway">
    <text evidence="2">Cofactor biosynthesis; 7,8-dihydroneopterin triphosphate biosynthesis; 7,8-dihydroneopterin triphosphate from GTP: step 1/1.</text>
</comment>
<comment type="subunit">
    <text evidence="1">Toroid-shaped homodecamer, composed of two pentamers of five dimers.</text>
</comment>
<comment type="similarity">
    <text evidence="2">Belongs to the GTP cyclohydrolase I family.</text>
</comment>
<accession>Q8EYG1</accession>
<sequence>MEEDVINILKSIGEDPTREGLLNTPKRVKKAYEFLTSGYRADITKIVNGAIFEEPTEGMVLVRDIEMYSLCEHHLLPFYGKAHVAYLPNKKIIGISKIPRIVDVFARRLQVQERLTEQIAYAIQEVLDPQGVAVVIKAKHLCMMMRGVEKQNSELFTSCMLGAFKENMVTRSEFLDLIRTGST</sequence>
<gene>
    <name evidence="2" type="primary">folE</name>
    <name type="ordered locus">LA_4255</name>
</gene>
<protein>
    <recommendedName>
        <fullName evidence="2">GTP cyclohydrolase 1</fullName>
        <ecNumber evidence="2">3.5.4.16</ecNumber>
    </recommendedName>
    <alternativeName>
        <fullName evidence="2">GTP cyclohydrolase I</fullName>
        <shortName evidence="2">GTP-CH-I</shortName>
    </alternativeName>
</protein>
<organism>
    <name type="scientific">Leptospira interrogans serogroup Icterohaemorrhagiae serovar Lai (strain 56601)</name>
    <dbReference type="NCBI Taxonomy" id="189518"/>
    <lineage>
        <taxon>Bacteria</taxon>
        <taxon>Pseudomonadati</taxon>
        <taxon>Spirochaetota</taxon>
        <taxon>Spirochaetia</taxon>
        <taxon>Leptospirales</taxon>
        <taxon>Leptospiraceae</taxon>
        <taxon>Leptospira</taxon>
    </lineage>
</organism>
<feature type="chain" id="PRO_0000119418" description="GTP cyclohydrolase 1">
    <location>
        <begin position="1"/>
        <end position="183"/>
    </location>
</feature>
<feature type="binding site" evidence="2">
    <location>
        <position position="71"/>
    </location>
    <ligand>
        <name>Zn(2+)</name>
        <dbReference type="ChEBI" id="CHEBI:29105"/>
    </ligand>
</feature>
<feature type="binding site" evidence="2">
    <location>
        <position position="74"/>
    </location>
    <ligand>
        <name>Zn(2+)</name>
        <dbReference type="ChEBI" id="CHEBI:29105"/>
    </ligand>
</feature>
<feature type="binding site" evidence="2">
    <location>
        <position position="142"/>
    </location>
    <ligand>
        <name>Zn(2+)</name>
        <dbReference type="ChEBI" id="CHEBI:29105"/>
    </ligand>
</feature>
<reference key="1">
    <citation type="journal article" date="2003" name="Nature">
        <title>Unique physiological and pathogenic features of Leptospira interrogans revealed by whole-genome sequencing.</title>
        <authorList>
            <person name="Ren S.-X."/>
            <person name="Fu G."/>
            <person name="Jiang X.-G."/>
            <person name="Zeng R."/>
            <person name="Miao Y.-G."/>
            <person name="Xu H."/>
            <person name="Zhang Y.-X."/>
            <person name="Xiong H."/>
            <person name="Lu G."/>
            <person name="Lu L.-F."/>
            <person name="Jiang H.-Q."/>
            <person name="Jia J."/>
            <person name="Tu Y.-F."/>
            <person name="Jiang J.-X."/>
            <person name="Gu W.-Y."/>
            <person name="Zhang Y.-Q."/>
            <person name="Cai Z."/>
            <person name="Sheng H.-H."/>
            <person name="Yin H.-F."/>
            <person name="Zhang Y."/>
            <person name="Zhu G.-F."/>
            <person name="Wan M."/>
            <person name="Huang H.-L."/>
            <person name="Qian Z."/>
            <person name="Wang S.-Y."/>
            <person name="Ma W."/>
            <person name="Yao Z.-J."/>
            <person name="Shen Y."/>
            <person name="Qiang B.-Q."/>
            <person name="Xia Q.-C."/>
            <person name="Guo X.-K."/>
            <person name="Danchin A."/>
            <person name="Saint Girons I."/>
            <person name="Somerville R.L."/>
            <person name="Wen Y.-M."/>
            <person name="Shi M.-H."/>
            <person name="Chen Z."/>
            <person name="Xu J.-G."/>
            <person name="Zhao G.-P."/>
        </authorList>
    </citation>
    <scope>NUCLEOTIDE SEQUENCE [LARGE SCALE GENOMIC DNA]</scope>
    <source>
        <strain>56601</strain>
    </source>
</reference>